<accession>Q96HH4</accession>
<accession>B2R8W6</accession>
<protein>
    <recommendedName>
        <fullName>Transmembrane protein 169</fullName>
    </recommendedName>
</protein>
<proteinExistence type="evidence at protein level"/>
<comment type="subcellular location">
    <subcellularLocation>
        <location evidence="3">Membrane</location>
        <topology evidence="3">Multi-pass membrane protein</topology>
    </subcellularLocation>
</comment>
<gene>
    <name type="primary">TMEM169</name>
</gene>
<feature type="chain" id="PRO_0000271039" description="Transmembrane protein 169">
    <location>
        <begin position="1"/>
        <end position="297"/>
    </location>
</feature>
<feature type="topological domain" description="Extracellular" evidence="1">
    <location>
        <begin position="1"/>
        <end position="159"/>
    </location>
</feature>
<feature type="transmembrane region" description="Helical" evidence="1">
    <location>
        <begin position="160"/>
        <end position="180"/>
    </location>
</feature>
<feature type="topological domain" description="Cytoplasmic" evidence="1">
    <location>
        <begin position="181"/>
        <end position="210"/>
    </location>
</feature>
<feature type="transmembrane region" description="Helical" evidence="1">
    <location>
        <begin position="211"/>
        <end position="231"/>
    </location>
</feature>
<feature type="topological domain" description="Extracellular" evidence="1">
    <location>
        <begin position="232"/>
        <end position="297"/>
    </location>
</feature>
<feature type="region of interest" description="Disordered" evidence="2">
    <location>
        <begin position="1"/>
        <end position="85"/>
    </location>
</feature>
<feature type="compositionally biased region" description="Acidic residues" evidence="2">
    <location>
        <begin position="61"/>
        <end position="85"/>
    </location>
</feature>
<evidence type="ECO:0000255" key="1"/>
<evidence type="ECO:0000256" key="2">
    <source>
        <dbReference type="SAM" id="MobiDB-lite"/>
    </source>
</evidence>
<evidence type="ECO:0000305" key="3"/>
<keyword id="KW-0472">Membrane</keyword>
<keyword id="KW-1267">Proteomics identification</keyword>
<keyword id="KW-1185">Reference proteome</keyword>
<keyword id="KW-0812">Transmembrane</keyword>
<keyword id="KW-1133">Transmembrane helix</keyword>
<reference key="1">
    <citation type="journal article" date="2004" name="Nat. Genet.">
        <title>Complete sequencing and characterization of 21,243 full-length human cDNAs.</title>
        <authorList>
            <person name="Ota T."/>
            <person name="Suzuki Y."/>
            <person name="Nishikawa T."/>
            <person name="Otsuki T."/>
            <person name="Sugiyama T."/>
            <person name="Irie R."/>
            <person name="Wakamatsu A."/>
            <person name="Hayashi K."/>
            <person name="Sato H."/>
            <person name="Nagai K."/>
            <person name="Kimura K."/>
            <person name="Makita H."/>
            <person name="Sekine M."/>
            <person name="Obayashi M."/>
            <person name="Nishi T."/>
            <person name="Shibahara T."/>
            <person name="Tanaka T."/>
            <person name="Ishii S."/>
            <person name="Yamamoto J."/>
            <person name="Saito K."/>
            <person name="Kawai Y."/>
            <person name="Isono Y."/>
            <person name="Nakamura Y."/>
            <person name="Nagahari K."/>
            <person name="Murakami K."/>
            <person name="Yasuda T."/>
            <person name="Iwayanagi T."/>
            <person name="Wagatsuma M."/>
            <person name="Shiratori A."/>
            <person name="Sudo H."/>
            <person name="Hosoiri T."/>
            <person name="Kaku Y."/>
            <person name="Kodaira H."/>
            <person name="Kondo H."/>
            <person name="Sugawara M."/>
            <person name="Takahashi M."/>
            <person name="Kanda K."/>
            <person name="Yokoi T."/>
            <person name="Furuya T."/>
            <person name="Kikkawa E."/>
            <person name="Omura Y."/>
            <person name="Abe K."/>
            <person name="Kamihara K."/>
            <person name="Katsuta N."/>
            <person name="Sato K."/>
            <person name="Tanikawa M."/>
            <person name="Yamazaki M."/>
            <person name="Ninomiya K."/>
            <person name="Ishibashi T."/>
            <person name="Yamashita H."/>
            <person name="Murakawa K."/>
            <person name="Fujimori K."/>
            <person name="Tanai H."/>
            <person name="Kimata M."/>
            <person name="Watanabe M."/>
            <person name="Hiraoka S."/>
            <person name="Chiba Y."/>
            <person name="Ishida S."/>
            <person name="Ono Y."/>
            <person name="Takiguchi S."/>
            <person name="Watanabe S."/>
            <person name="Yosida M."/>
            <person name="Hotuta T."/>
            <person name="Kusano J."/>
            <person name="Kanehori K."/>
            <person name="Takahashi-Fujii A."/>
            <person name="Hara H."/>
            <person name="Tanase T.-O."/>
            <person name="Nomura Y."/>
            <person name="Togiya S."/>
            <person name="Komai F."/>
            <person name="Hara R."/>
            <person name="Takeuchi K."/>
            <person name="Arita M."/>
            <person name="Imose N."/>
            <person name="Musashino K."/>
            <person name="Yuuki H."/>
            <person name="Oshima A."/>
            <person name="Sasaki N."/>
            <person name="Aotsuka S."/>
            <person name="Yoshikawa Y."/>
            <person name="Matsunawa H."/>
            <person name="Ichihara T."/>
            <person name="Shiohata N."/>
            <person name="Sano S."/>
            <person name="Moriya S."/>
            <person name="Momiyama H."/>
            <person name="Satoh N."/>
            <person name="Takami S."/>
            <person name="Terashima Y."/>
            <person name="Suzuki O."/>
            <person name="Nakagawa S."/>
            <person name="Senoh A."/>
            <person name="Mizoguchi H."/>
            <person name="Goto Y."/>
            <person name="Shimizu F."/>
            <person name="Wakebe H."/>
            <person name="Hishigaki H."/>
            <person name="Watanabe T."/>
            <person name="Sugiyama A."/>
            <person name="Takemoto M."/>
            <person name="Kawakami B."/>
            <person name="Yamazaki M."/>
            <person name="Watanabe K."/>
            <person name="Kumagai A."/>
            <person name="Itakura S."/>
            <person name="Fukuzumi Y."/>
            <person name="Fujimori Y."/>
            <person name="Komiyama M."/>
            <person name="Tashiro H."/>
            <person name="Tanigami A."/>
            <person name="Fujiwara T."/>
            <person name="Ono T."/>
            <person name="Yamada K."/>
            <person name="Fujii Y."/>
            <person name="Ozaki K."/>
            <person name="Hirao M."/>
            <person name="Ohmori Y."/>
            <person name="Kawabata A."/>
            <person name="Hikiji T."/>
            <person name="Kobatake N."/>
            <person name="Inagaki H."/>
            <person name="Ikema Y."/>
            <person name="Okamoto S."/>
            <person name="Okitani R."/>
            <person name="Kawakami T."/>
            <person name="Noguchi S."/>
            <person name="Itoh T."/>
            <person name="Shigeta K."/>
            <person name="Senba T."/>
            <person name="Matsumura K."/>
            <person name="Nakajima Y."/>
            <person name="Mizuno T."/>
            <person name="Morinaga M."/>
            <person name="Sasaki M."/>
            <person name="Togashi T."/>
            <person name="Oyama M."/>
            <person name="Hata H."/>
            <person name="Watanabe M."/>
            <person name="Komatsu T."/>
            <person name="Mizushima-Sugano J."/>
            <person name="Satoh T."/>
            <person name="Shirai Y."/>
            <person name="Takahashi Y."/>
            <person name="Nakagawa K."/>
            <person name="Okumura K."/>
            <person name="Nagase T."/>
            <person name="Nomura N."/>
            <person name="Kikuchi H."/>
            <person name="Masuho Y."/>
            <person name="Yamashita R."/>
            <person name="Nakai K."/>
            <person name="Yada T."/>
            <person name="Nakamura Y."/>
            <person name="Ohara O."/>
            <person name="Isogai T."/>
            <person name="Sugano S."/>
        </authorList>
    </citation>
    <scope>NUCLEOTIDE SEQUENCE [LARGE SCALE MRNA]</scope>
    <source>
        <tissue>Brain</tissue>
    </source>
</reference>
<reference key="2">
    <citation type="journal article" date="2007" name="BMC Genomics">
        <title>The full-ORF clone resource of the German cDNA consortium.</title>
        <authorList>
            <person name="Bechtel S."/>
            <person name="Rosenfelder H."/>
            <person name="Duda A."/>
            <person name="Schmidt C.P."/>
            <person name="Ernst U."/>
            <person name="Wellenreuther R."/>
            <person name="Mehrle A."/>
            <person name="Schuster C."/>
            <person name="Bahr A."/>
            <person name="Bloecker H."/>
            <person name="Heubner D."/>
            <person name="Hoerlein A."/>
            <person name="Michel G."/>
            <person name="Wedler H."/>
            <person name="Koehrer K."/>
            <person name="Ottenwaelder B."/>
            <person name="Poustka A."/>
            <person name="Wiemann S."/>
            <person name="Schupp I."/>
        </authorList>
    </citation>
    <scope>NUCLEOTIDE SEQUENCE [LARGE SCALE MRNA]</scope>
    <source>
        <tissue>Retina</tissue>
    </source>
</reference>
<reference key="3">
    <citation type="journal article" date="2005" name="Nature">
        <title>Generation and annotation of the DNA sequences of human chromosomes 2 and 4.</title>
        <authorList>
            <person name="Hillier L.W."/>
            <person name="Graves T.A."/>
            <person name="Fulton R.S."/>
            <person name="Fulton L.A."/>
            <person name="Pepin K.H."/>
            <person name="Minx P."/>
            <person name="Wagner-McPherson C."/>
            <person name="Layman D."/>
            <person name="Wylie K."/>
            <person name="Sekhon M."/>
            <person name="Becker M.C."/>
            <person name="Fewell G.A."/>
            <person name="Delehaunty K.D."/>
            <person name="Miner T.L."/>
            <person name="Nash W.E."/>
            <person name="Kremitzki C."/>
            <person name="Oddy L."/>
            <person name="Du H."/>
            <person name="Sun H."/>
            <person name="Bradshaw-Cordum H."/>
            <person name="Ali J."/>
            <person name="Carter J."/>
            <person name="Cordes M."/>
            <person name="Harris A."/>
            <person name="Isak A."/>
            <person name="van Brunt A."/>
            <person name="Nguyen C."/>
            <person name="Du F."/>
            <person name="Courtney L."/>
            <person name="Kalicki J."/>
            <person name="Ozersky P."/>
            <person name="Abbott S."/>
            <person name="Armstrong J."/>
            <person name="Belter E.A."/>
            <person name="Caruso L."/>
            <person name="Cedroni M."/>
            <person name="Cotton M."/>
            <person name="Davidson T."/>
            <person name="Desai A."/>
            <person name="Elliott G."/>
            <person name="Erb T."/>
            <person name="Fronick C."/>
            <person name="Gaige T."/>
            <person name="Haakenson W."/>
            <person name="Haglund K."/>
            <person name="Holmes A."/>
            <person name="Harkins R."/>
            <person name="Kim K."/>
            <person name="Kruchowski S.S."/>
            <person name="Strong C.M."/>
            <person name="Grewal N."/>
            <person name="Goyea E."/>
            <person name="Hou S."/>
            <person name="Levy A."/>
            <person name="Martinka S."/>
            <person name="Mead K."/>
            <person name="McLellan M.D."/>
            <person name="Meyer R."/>
            <person name="Randall-Maher J."/>
            <person name="Tomlinson C."/>
            <person name="Dauphin-Kohlberg S."/>
            <person name="Kozlowicz-Reilly A."/>
            <person name="Shah N."/>
            <person name="Swearengen-Shahid S."/>
            <person name="Snider J."/>
            <person name="Strong J.T."/>
            <person name="Thompson J."/>
            <person name="Yoakum M."/>
            <person name="Leonard S."/>
            <person name="Pearman C."/>
            <person name="Trani L."/>
            <person name="Radionenko M."/>
            <person name="Waligorski J.E."/>
            <person name="Wang C."/>
            <person name="Rock S.M."/>
            <person name="Tin-Wollam A.-M."/>
            <person name="Maupin R."/>
            <person name="Latreille P."/>
            <person name="Wendl M.C."/>
            <person name="Yang S.-P."/>
            <person name="Pohl C."/>
            <person name="Wallis J.W."/>
            <person name="Spieth J."/>
            <person name="Bieri T.A."/>
            <person name="Berkowicz N."/>
            <person name="Nelson J.O."/>
            <person name="Osborne J."/>
            <person name="Ding L."/>
            <person name="Meyer R."/>
            <person name="Sabo A."/>
            <person name="Shotland Y."/>
            <person name="Sinha P."/>
            <person name="Wohldmann P.E."/>
            <person name="Cook L.L."/>
            <person name="Hickenbotham M.T."/>
            <person name="Eldred J."/>
            <person name="Williams D."/>
            <person name="Jones T.A."/>
            <person name="She X."/>
            <person name="Ciccarelli F.D."/>
            <person name="Izaurralde E."/>
            <person name="Taylor J."/>
            <person name="Schmutz J."/>
            <person name="Myers R.M."/>
            <person name="Cox D.R."/>
            <person name="Huang X."/>
            <person name="McPherson J.D."/>
            <person name="Mardis E.R."/>
            <person name="Clifton S.W."/>
            <person name="Warren W.C."/>
            <person name="Chinwalla A.T."/>
            <person name="Eddy S.R."/>
            <person name="Marra M.A."/>
            <person name="Ovcharenko I."/>
            <person name="Furey T.S."/>
            <person name="Miller W."/>
            <person name="Eichler E.E."/>
            <person name="Bork P."/>
            <person name="Suyama M."/>
            <person name="Torrents D."/>
            <person name="Waterston R.H."/>
            <person name="Wilson R.K."/>
        </authorList>
    </citation>
    <scope>NUCLEOTIDE SEQUENCE [LARGE SCALE GENOMIC DNA]</scope>
</reference>
<reference key="4">
    <citation type="submission" date="2005-07" db="EMBL/GenBank/DDBJ databases">
        <authorList>
            <person name="Mural R.J."/>
            <person name="Istrail S."/>
            <person name="Sutton G.G."/>
            <person name="Florea L."/>
            <person name="Halpern A.L."/>
            <person name="Mobarry C.M."/>
            <person name="Lippert R."/>
            <person name="Walenz B."/>
            <person name="Shatkay H."/>
            <person name="Dew I."/>
            <person name="Miller J.R."/>
            <person name="Flanigan M.J."/>
            <person name="Edwards N.J."/>
            <person name="Bolanos R."/>
            <person name="Fasulo D."/>
            <person name="Halldorsson B.V."/>
            <person name="Hannenhalli S."/>
            <person name="Turner R."/>
            <person name="Yooseph S."/>
            <person name="Lu F."/>
            <person name="Nusskern D.R."/>
            <person name="Shue B.C."/>
            <person name="Zheng X.H."/>
            <person name="Zhong F."/>
            <person name="Delcher A.L."/>
            <person name="Huson D.H."/>
            <person name="Kravitz S.A."/>
            <person name="Mouchard L."/>
            <person name="Reinert K."/>
            <person name="Remington K.A."/>
            <person name="Clark A.G."/>
            <person name="Waterman M.S."/>
            <person name="Eichler E.E."/>
            <person name="Adams M.D."/>
            <person name="Hunkapiller M.W."/>
            <person name="Myers E.W."/>
            <person name="Venter J.C."/>
        </authorList>
    </citation>
    <scope>NUCLEOTIDE SEQUENCE [LARGE SCALE GENOMIC DNA]</scope>
</reference>
<reference key="5">
    <citation type="journal article" date="2004" name="Genome Res.">
        <title>The status, quality, and expansion of the NIH full-length cDNA project: the Mammalian Gene Collection (MGC).</title>
        <authorList>
            <consortium name="The MGC Project Team"/>
        </authorList>
    </citation>
    <scope>NUCLEOTIDE SEQUENCE [LARGE SCALE MRNA]</scope>
    <source>
        <tissue>Brain</tissue>
    </source>
</reference>
<sequence>MEEPTAVEGQVQLPSPHQGSLRKAVAAALALDGESTMGHRKKKRKESRPESIIIYRSDNEKTDEEPGESEGGDQPKEEEGDDFLDYPVDDDMWNLPLDSRYVTLTGTITRGKKKGQMVDIHVTLTEKELQELTKPKESSRETTPEGRMACQMGADRGPHVVLWTLICLPVVFILSFVVSFYYGTITWYNIFLVYNEERTFWHKISYCPCLVLFYPVLIMAMASSLGLYAAVVQLSWSWEAWWQAARDMEKGFCGWLCSKLGLEDCSPYSIVELLESDNISSTLSNKDPIQEVETSTV</sequence>
<dbReference type="EMBL" id="AK091582">
    <property type="protein sequence ID" value="BAC03700.1"/>
    <property type="molecule type" value="mRNA"/>
</dbReference>
<dbReference type="EMBL" id="AK313536">
    <property type="protein sequence ID" value="BAG36313.1"/>
    <property type="molecule type" value="mRNA"/>
</dbReference>
<dbReference type="EMBL" id="CR933667">
    <property type="protein sequence ID" value="CAI45964.1"/>
    <property type="molecule type" value="mRNA"/>
</dbReference>
<dbReference type="EMBL" id="AC010686">
    <property type="protein sequence ID" value="AAY14658.1"/>
    <property type="molecule type" value="Genomic_DNA"/>
</dbReference>
<dbReference type="EMBL" id="CH471063">
    <property type="protein sequence ID" value="EAW70559.1"/>
    <property type="molecule type" value="Genomic_DNA"/>
</dbReference>
<dbReference type="EMBL" id="BC008604">
    <property type="protein sequence ID" value="AAH08604.1"/>
    <property type="molecule type" value="mRNA"/>
</dbReference>
<dbReference type="CCDS" id="CCDS2401.1"/>
<dbReference type="RefSeq" id="NP_001135782.1">
    <property type="nucleotide sequence ID" value="NM_001142310.2"/>
</dbReference>
<dbReference type="RefSeq" id="NP_001135783.1">
    <property type="nucleotide sequence ID" value="NM_001142311.2"/>
</dbReference>
<dbReference type="RefSeq" id="NP_001135784.1">
    <property type="nucleotide sequence ID" value="NM_001142312.2"/>
</dbReference>
<dbReference type="RefSeq" id="NP_612399.1">
    <property type="nucleotide sequence ID" value="NM_138390.4"/>
</dbReference>
<dbReference type="RefSeq" id="XP_006712914.1">
    <property type="nucleotide sequence ID" value="XM_006712851.1"/>
</dbReference>
<dbReference type="RefSeq" id="XP_011510475.1">
    <property type="nucleotide sequence ID" value="XM_011512173.3"/>
</dbReference>
<dbReference type="RefSeq" id="XP_054200540.1">
    <property type="nucleotide sequence ID" value="XM_054344565.1"/>
</dbReference>
<dbReference type="BioGRID" id="124968">
    <property type="interactions" value="95"/>
</dbReference>
<dbReference type="FunCoup" id="Q96HH4">
    <property type="interactions" value="48"/>
</dbReference>
<dbReference type="IntAct" id="Q96HH4">
    <property type="interactions" value="71"/>
</dbReference>
<dbReference type="STRING" id="9606.ENSP00000412524"/>
<dbReference type="iPTMnet" id="Q96HH4"/>
<dbReference type="PhosphoSitePlus" id="Q96HH4"/>
<dbReference type="BioMuta" id="TMEM169"/>
<dbReference type="DMDM" id="74731931"/>
<dbReference type="MassIVE" id="Q96HH4"/>
<dbReference type="PaxDb" id="9606-ENSP00000412524"/>
<dbReference type="PeptideAtlas" id="Q96HH4"/>
<dbReference type="ProteomicsDB" id="76746"/>
<dbReference type="Antibodypedia" id="68249">
    <property type="antibodies" value="47 antibodies from 9 providers"/>
</dbReference>
<dbReference type="DNASU" id="92691"/>
<dbReference type="Ensembl" id="ENST00000295658.8">
    <property type="protein sequence ID" value="ENSP00000295658.4"/>
    <property type="gene ID" value="ENSG00000163449.11"/>
</dbReference>
<dbReference type="Ensembl" id="ENST00000406027.2">
    <property type="protein sequence ID" value="ENSP00000384100.2"/>
    <property type="gene ID" value="ENSG00000163449.11"/>
</dbReference>
<dbReference type="Ensembl" id="ENST00000437356.7">
    <property type="protein sequence ID" value="ENSP00000401305.2"/>
    <property type="gene ID" value="ENSG00000163449.11"/>
</dbReference>
<dbReference type="Ensembl" id="ENST00000454545.5">
    <property type="protein sequence ID" value="ENSP00000412524.1"/>
    <property type="gene ID" value="ENSG00000163449.11"/>
</dbReference>
<dbReference type="GeneID" id="92691"/>
<dbReference type="KEGG" id="hsa:92691"/>
<dbReference type="MANE-Select" id="ENST00000437356.7">
    <property type="protein sequence ID" value="ENSP00000401305.2"/>
    <property type="RefSeq nucleotide sequence ID" value="NM_001142311.2"/>
    <property type="RefSeq protein sequence ID" value="NP_001135783.1"/>
</dbReference>
<dbReference type="UCSC" id="uc002vfv.5">
    <property type="organism name" value="human"/>
</dbReference>
<dbReference type="AGR" id="HGNC:25130"/>
<dbReference type="CTD" id="92691"/>
<dbReference type="DisGeNET" id="92691"/>
<dbReference type="GeneCards" id="TMEM169"/>
<dbReference type="HGNC" id="HGNC:25130">
    <property type="gene designation" value="TMEM169"/>
</dbReference>
<dbReference type="HPA" id="ENSG00000163449">
    <property type="expression patterns" value="Tissue enhanced (brain, retina)"/>
</dbReference>
<dbReference type="neXtProt" id="NX_Q96HH4"/>
<dbReference type="OpenTargets" id="ENSG00000163449"/>
<dbReference type="PharmGKB" id="PA162405911"/>
<dbReference type="VEuPathDB" id="HostDB:ENSG00000163449"/>
<dbReference type="eggNOG" id="ENOG502QUD9">
    <property type="taxonomic scope" value="Eukaryota"/>
</dbReference>
<dbReference type="GeneTree" id="ENSGT00390000015276"/>
<dbReference type="HOGENOM" id="CLU_082140_0_0_1"/>
<dbReference type="InParanoid" id="Q96HH4"/>
<dbReference type="OMA" id="AFSEWWQ"/>
<dbReference type="OrthoDB" id="10066407at2759"/>
<dbReference type="PAN-GO" id="Q96HH4">
    <property type="GO annotations" value="0 GO annotations based on evolutionary models"/>
</dbReference>
<dbReference type="PhylomeDB" id="Q96HH4"/>
<dbReference type="TreeFam" id="TF323682"/>
<dbReference type="PathwayCommons" id="Q96HH4"/>
<dbReference type="BioGRID-ORCS" id="92691">
    <property type="hits" value="9 hits in 1147 CRISPR screens"/>
</dbReference>
<dbReference type="GenomeRNAi" id="92691"/>
<dbReference type="Pharos" id="Q96HH4">
    <property type="development level" value="Tdark"/>
</dbReference>
<dbReference type="PRO" id="PR:Q96HH4"/>
<dbReference type="Proteomes" id="UP000005640">
    <property type="component" value="Chromosome 2"/>
</dbReference>
<dbReference type="RNAct" id="Q96HH4">
    <property type="molecule type" value="protein"/>
</dbReference>
<dbReference type="Bgee" id="ENSG00000163449">
    <property type="expression patterns" value="Expressed in cortical plate and 104 other cell types or tissues"/>
</dbReference>
<dbReference type="ExpressionAtlas" id="Q96HH4">
    <property type="expression patterns" value="baseline and differential"/>
</dbReference>
<dbReference type="GO" id="GO:0016020">
    <property type="term" value="C:membrane"/>
    <property type="evidence" value="ECO:0007669"/>
    <property type="project" value="UniProtKB-SubCell"/>
</dbReference>
<dbReference type="InterPro" id="IPR029386">
    <property type="entry name" value="TMEM169"/>
</dbReference>
<dbReference type="PANTHER" id="PTHR31777">
    <property type="entry name" value="TRANSMEMBRANE PROTEIN 169"/>
    <property type="match status" value="1"/>
</dbReference>
<dbReference type="PANTHER" id="PTHR31777:SF0">
    <property type="entry name" value="TRANSMEMBRANE PROTEIN 169"/>
    <property type="match status" value="1"/>
</dbReference>
<dbReference type="Pfam" id="PF15052">
    <property type="entry name" value="TMEM169"/>
    <property type="match status" value="1"/>
</dbReference>
<organism>
    <name type="scientific">Homo sapiens</name>
    <name type="common">Human</name>
    <dbReference type="NCBI Taxonomy" id="9606"/>
    <lineage>
        <taxon>Eukaryota</taxon>
        <taxon>Metazoa</taxon>
        <taxon>Chordata</taxon>
        <taxon>Craniata</taxon>
        <taxon>Vertebrata</taxon>
        <taxon>Euteleostomi</taxon>
        <taxon>Mammalia</taxon>
        <taxon>Eutheria</taxon>
        <taxon>Euarchontoglires</taxon>
        <taxon>Primates</taxon>
        <taxon>Haplorrhini</taxon>
        <taxon>Catarrhini</taxon>
        <taxon>Hominidae</taxon>
        <taxon>Homo</taxon>
    </lineage>
</organism>
<name>TM169_HUMAN</name>